<reference key="1">
    <citation type="journal article" date="2008" name="DNA Res.">
        <title>Complete genome sequence and comparative analysis of the wild-type commensal Escherichia coli strain SE11 isolated from a healthy adult.</title>
        <authorList>
            <person name="Oshima K."/>
            <person name="Toh H."/>
            <person name="Ogura Y."/>
            <person name="Sasamoto H."/>
            <person name="Morita H."/>
            <person name="Park S.-H."/>
            <person name="Ooka T."/>
            <person name="Iyoda S."/>
            <person name="Taylor T.D."/>
            <person name="Hayashi T."/>
            <person name="Itoh K."/>
            <person name="Hattori M."/>
        </authorList>
    </citation>
    <scope>NUCLEOTIDE SEQUENCE [LARGE SCALE GENOMIC DNA]</scope>
    <source>
        <strain>SE11</strain>
    </source>
</reference>
<accession>B6IBB8</accession>
<evidence type="ECO:0000255" key="1">
    <source>
        <dbReference type="HAMAP-Rule" id="MF_01832"/>
    </source>
</evidence>
<feature type="chain" id="PRO_1000188326" description="Cysteine desulfuration protein SufE">
    <location>
        <begin position="1"/>
        <end position="138"/>
    </location>
</feature>
<feature type="active site" description="Cysteine persulfide intermediate" evidence="1">
    <location>
        <position position="51"/>
    </location>
</feature>
<gene>
    <name evidence="1" type="primary">sufE</name>
    <name type="ordered locus">ECSE_1802</name>
</gene>
<organism>
    <name type="scientific">Escherichia coli (strain SE11)</name>
    <dbReference type="NCBI Taxonomy" id="409438"/>
    <lineage>
        <taxon>Bacteria</taxon>
        <taxon>Pseudomonadati</taxon>
        <taxon>Pseudomonadota</taxon>
        <taxon>Gammaproteobacteria</taxon>
        <taxon>Enterobacterales</taxon>
        <taxon>Enterobacteriaceae</taxon>
        <taxon>Escherichia</taxon>
    </lineage>
</organism>
<sequence>MALLPDKEKLLRNFLRCANWEEKYLYIIELGQRLPELRAEDRSPQNSIQGCQSQVWIVMRQNAQGIIELQGDSDAAIVKGLIAVVFILYDQMTPQDIVNFDVRPWFEKMALTQHLTPSRSQGLEAMIRAIRAKAAALS</sequence>
<name>SUFE_ECOSE</name>
<proteinExistence type="inferred from homology"/>
<dbReference type="EMBL" id="AP009240">
    <property type="protein sequence ID" value="BAG77326.1"/>
    <property type="molecule type" value="Genomic_DNA"/>
</dbReference>
<dbReference type="RefSeq" id="WP_001196517.1">
    <property type="nucleotide sequence ID" value="NC_011415.1"/>
</dbReference>
<dbReference type="SMR" id="B6IBB8"/>
<dbReference type="GeneID" id="75204525"/>
<dbReference type="KEGG" id="ecy:ECSE_1802"/>
<dbReference type="HOGENOM" id="CLU_124502_1_1_6"/>
<dbReference type="UniPathway" id="UPA00266"/>
<dbReference type="Proteomes" id="UP000008199">
    <property type="component" value="Chromosome"/>
</dbReference>
<dbReference type="GO" id="GO:0005737">
    <property type="term" value="C:cytoplasm"/>
    <property type="evidence" value="ECO:0007669"/>
    <property type="project" value="UniProtKB-SubCell"/>
</dbReference>
<dbReference type="GO" id="GO:0016226">
    <property type="term" value="P:iron-sulfur cluster assembly"/>
    <property type="evidence" value="ECO:0007669"/>
    <property type="project" value="InterPro"/>
</dbReference>
<dbReference type="GO" id="GO:0006790">
    <property type="term" value="P:sulfur compound metabolic process"/>
    <property type="evidence" value="ECO:0007669"/>
    <property type="project" value="InterPro"/>
</dbReference>
<dbReference type="FunFam" id="3.90.1010.10:FF:000004">
    <property type="entry name" value="Cysteine desulfuration protein SufE"/>
    <property type="match status" value="1"/>
</dbReference>
<dbReference type="Gene3D" id="3.90.1010.10">
    <property type="match status" value="1"/>
</dbReference>
<dbReference type="HAMAP" id="MF_01832">
    <property type="entry name" value="SufE"/>
    <property type="match status" value="1"/>
</dbReference>
<dbReference type="InterPro" id="IPR023939">
    <property type="entry name" value="Cysteine_desulfuration_SufE"/>
</dbReference>
<dbReference type="InterPro" id="IPR003808">
    <property type="entry name" value="Fe-S_metab-assoc_dom"/>
</dbReference>
<dbReference type="NCBIfam" id="NF006792">
    <property type="entry name" value="PRK09296.1"/>
    <property type="match status" value="1"/>
</dbReference>
<dbReference type="PANTHER" id="PTHR43597:SF3">
    <property type="entry name" value="CYSTEINE DESULFURATION PROTEIN SUFE"/>
    <property type="match status" value="1"/>
</dbReference>
<dbReference type="PANTHER" id="PTHR43597">
    <property type="entry name" value="SULFUR ACCEPTOR PROTEIN CSDE"/>
    <property type="match status" value="1"/>
</dbReference>
<dbReference type="Pfam" id="PF02657">
    <property type="entry name" value="SufE"/>
    <property type="match status" value="1"/>
</dbReference>
<dbReference type="SUPFAM" id="SSF82649">
    <property type="entry name" value="SufE/NifU"/>
    <property type="match status" value="1"/>
</dbReference>
<comment type="function">
    <text evidence="1">Participates in cysteine desulfuration mediated by SufS. Cysteine desulfuration mobilizes sulfur from L-cysteine to yield L-alanine and constitutes an essential step in sulfur metabolism for biosynthesis of a variety of sulfur-containing biomolecules. Functions as a sulfur acceptor for SufS, by mediating the direct transfer of the sulfur atom from the S-sulfanylcysteine of SufS, an intermediate product of cysteine desulfuration process.</text>
</comment>
<comment type="pathway">
    <text evidence="1">Cofactor biosynthesis; iron-sulfur cluster biosynthesis.</text>
</comment>
<comment type="subunit">
    <text evidence="1">Homodimer. Interacts with SufS.</text>
</comment>
<comment type="subcellular location">
    <subcellularLocation>
        <location evidence="1">Cytoplasm</location>
    </subcellularLocation>
</comment>
<comment type="similarity">
    <text evidence="1">Belongs to the SufE family.</text>
</comment>
<keyword id="KW-0963">Cytoplasm</keyword>
<protein>
    <recommendedName>
        <fullName evidence="1">Cysteine desulfuration protein SufE</fullName>
    </recommendedName>
</protein>